<keyword id="KW-0002">3D-structure</keyword>
<keyword id="KW-0520">NAD</keyword>
<keyword id="KW-1185">Reference proteome</keyword>
<keyword id="KW-0808">Transferase</keyword>
<gene>
    <name evidence="1" type="primary">kptA</name>
    <name type="ordered locus">Cthe_3059</name>
</gene>
<name>KPTA_ACET2</name>
<organism>
    <name type="scientific">Acetivibrio thermocellus (strain ATCC 27405 / DSM 1237 / JCM 9322 / NBRC 103400 / NCIMB 10682 / NRRL B-4536 / VPI 7372)</name>
    <name type="common">Clostridium thermocellum</name>
    <dbReference type="NCBI Taxonomy" id="203119"/>
    <lineage>
        <taxon>Bacteria</taxon>
        <taxon>Bacillati</taxon>
        <taxon>Bacillota</taxon>
        <taxon>Clostridia</taxon>
        <taxon>Eubacteriales</taxon>
        <taxon>Oscillospiraceae</taxon>
        <taxon>Acetivibrio</taxon>
    </lineage>
</organism>
<evidence type="ECO:0000255" key="1">
    <source>
        <dbReference type="HAMAP-Rule" id="MF_00299"/>
    </source>
</evidence>
<evidence type="ECO:0007829" key="2">
    <source>
        <dbReference type="PDB" id="6E3A"/>
    </source>
</evidence>
<sequence>MVLIDYSKLSKEVAYALRHAPWEYGLELDAEGWVDINQLLSSLHECEKWKKVSEHDLHVMIEKSDKKRYEISNGKIRALYGHSIPQRIIKEQKCPPEVLYHGTARRFVKSIKEKGLQPQGRQYVHLSADVETALQVGKRRDIKPVLLIVNALEAWSEGIKFYLGNDKVWLADAIPSKYIRFE</sequence>
<accession>A3DJX6</accession>
<protein>
    <recommendedName>
        <fullName evidence="1">Probable RNA 2'-phosphotransferase</fullName>
        <ecNumber evidence="1">2.7.1.-</ecNumber>
    </recommendedName>
</protein>
<dbReference type="EC" id="2.7.1.-" evidence="1"/>
<dbReference type="EMBL" id="CP000568">
    <property type="protein sequence ID" value="ABN54255.1"/>
    <property type="molecule type" value="Genomic_DNA"/>
</dbReference>
<dbReference type="PDB" id="6E3A">
    <property type="method" value="X-ray"/>
    <property type="resolution" value="1.40 A"/>
    <property type="chains" value="A=1-182"/>
</dbReference>
<dbReference type="PDB" id="6EDE">
    <property type="method" value="X-ray"/>
    <property type="resolution" value="1.55 A"/>
    <property type="chains" value="A=1-182"/>
</dbReference>
<dbReference type="PDBsum" id="6E3A"/>
<dbReference type="PDBsum" id="6EDE"/>
<dbReference type="SMR" id="A3DJX6"/>
<dbReference type="STRING" id="203119.Cthe_3059"/>
<dbReference type="KEGG" id="cth:Cthe_3059"/>
<dbReference type="eggNOG" id="COG1859">
    <property type="taxonomic scope" value="Bacteria"/>
</dbReference>
<dbReference type="HOGENOM" id="CLU_052998_4_1_9"/>
<dbReference type="BRENDA" id="2.7.1.160">
    <property type="organism ID" value="1530"/>
</dbReference>
<dbReference type="Proteomes" id="UP000002145">
    <property type="component" value="Chromosome"/>
</dbReference>
<dbReference type="GO" id="GO:0003950">
    <property type="term" value="F:NAD+ poly-ADP-ribosyltransferase activity"/>
    <property type="evidence" value="ECO:0007669"/>
    <property type="project" value="InterPro"/>
</dbReference>
<dbReference type="GO" id="GO:0000215">
    <property type="term" value="F:tRNA 2'-phosphotransferase activity"/>
    <property type="evidence" value="ECO:0007669"/>
    <property type="project" value="TreeGrafter"/>
</dbReference>
<dbReference type="GO" id="GO:0006388">
    <property type="term" value="P:tRNA splicing, via endonucleolytic cleavage and ligation"/>
    <property type="evidence" value="ECO:0007669"/>
    <property type="project" value="UniProtKB-UniRule"/>
</dbReference>
<dbReference type="Gene3D" id="3.20.170.30">
    <property type="match status" value="1"/>
</dbReference>
<dbReference type="Gene3D" id="1.10.10.970">
    <property type="entry name" value="RNA 2'-phosphotransferase, Tpt1/KptA family, N-terminal domain"/>
    <property type="match status" value="1"/>
</dbReference>
<dbReference type="HAMAP" id="MF_00299">
    <property type="entry name" value="KptA"/>
    <property type="match status" value="1"/>
</dbReference>
<dbReference type="InterPro" id="IPR002745">
    <property type="entry name" value="Ptrans_KptA/Tpt1"/>
</dbReference>
<dbReference type="InterPro" id="IPR042081">
    <property type="entry name" value="RNA_2'-PTrans_C"/>
</dbReference>
<dbReference type="InterPro" id="IPR022928">
    <property type="entry name" value="RNA_2'-PTrans_KptA"/>
</dbReference>
<dbReference type="InterPro" id="IPR042080">
    <property type="entry name" value="RNA_2'-PTrans_N"/>
</dbReference>
<dbReference type="PANTHER" id="PTHR12684">
    <property type="entry name" value="PUTATIVE PHOSPHOTRANSFERASE"/>
    <property type="match status" value="1"/>
</dbReference>
<dbReference type="PANTHER" id="PTHR12684:SF2">
    <property type="entry name" value="TRNA 2'-PHOSPHOTRANSFERASE 1"/>
    <property type="match status" value="1"/>
</dbReference>
<dbReference type="Pfam" id="PF01885">
    <property type="entry name" value="PTS_2-RNA"/>
    <property type="match status" value="1"/>
</dbReference>
<dbReference type="SUPFAM" id="SSF56399">
    <property type="entry name" value="ADP-ribosylation"/>
    <property type="match status" value="1"/>
</dbReference>
<comment type="function">
    <text evidence="1">Removes the 2'-phosphate from RNA via an intermediate in which the phosphate is ADP-ribosylated by NAD followed by a presumed transesterification to release the RNA and generate ADP-ribose 1''-2''-cyclic phosphate (APPR&gt;P). May function as an ADP-ribosylase.</text>
</comment>
<comment type="similarity">
    <text evidence="1">Belongs to the KptA/TPT1 family.</text>
</comment>
<feature type="chain" id="PRO_1000022014" description="Probable RNA 2'-phosphotransferase">
    <location>
        <begin position="1"/>
        <end position="182"/>
    </location>
</feature>
<feature type="helix" evidence="2">
    <location>
        <begin position="6"/>
        <end position="18"/>
    </location>
</feature>
<feature type="helix" evidence="2">
    <location>
        <begin position="21"/>
        <end position="24"/>
    </location>
</feature>
<feature type="helix" evidence="2">
    <location>
        <begin position="36"/>
        <end position="43"/>
    </location>
</feature>
<feature type="helix" evidence="2">
    <location>
        <begin position="47"/>
        <end position="49"/>
    </location>
</feature>
<feature type="helix" evidence="2">
    <location>
        <begin position="54"/>
        <end position="63"/>
    </location>
</feature>
<feature type="strand" evidence="2">
    <location>
        <begin position="69"/>
        <end position="72"/>
    </location>
</feature>
<feature type="strand" evidence="2">
    <location>
        <begin position="75"/>
        <end position="80"/>
    </location>
</feature>
<feature type="strand" evidence="2">
    <location>
        <begin position="84"/>
        <end position="86"/>
    </location>
</feature>
<feature type="strand" evidence="2">
    <location>
        <begin position="99"/>
        <end position="103"/>
    </location>
</feature>
<feature type="helix" evidence="2">
    <location>
        <begin position="105"/>
        <end position="107"/>
    </location>
</feature>
<feature type="helix" evidence="2">
    <location>
        <begin position="108"/>
        <end position="114"/>
    </location>
</feature>
<feature type="strand" evidence="2">
    <location>
        <begin position="121"/>
        <end position="129"/>
    </location>
</feature>
<feature type="helix" evidence="2">
    <location>
        <begin position="130"/>
        <end position="138"/>
    </location>
</feature>
<feature type="strand" evidence="2">
    <location>
        <begin position="145"/>
        <end position="149"/>
    </location>
</feature>
<feature type="helix" evidence="2">
    <location>
        <begin position="151"/>
        <end position="156"/>
    </location>
</feature>
<feature type="strand" evidence="2">
    <location>
        <begin position="161"/>
        <end position="163"/>
    </location>
</feature>
<feature type="strand" evidence="2">
    <location>
        <begin position="166"/>
        <end position="172"/>
    </location>
</feature>
<feature type="helix" evidence="2">
    <location>
        <begin position="176"/>
        <end position="178"/>
    </location>
</feature>
<proteinExistence type="evidence at protein level"/>
<reference key="1">
    <citation type="submission" date="2007-02" db="EMBL/GenBank/DDBJ databases">
        <title>Complete sequence of Clostridium thermocellum ATCC 27405.</title>
        <authorList>
            <consortium name="US DOE Joint Genome Institute"/>
            <person name="Copeland A."/>
            <person name="Lucas S."/>
            <person name="Lapidus A."/>
            <person name="Barry K."/>
            <person name="Detter J.C."/>
            <person name="Glavina del Rio T."/>
            <person name="Hammon N."/>
            <person name="Israni S."/>
            <person name="Dalin E."/>
            <person name="Tice H."/>
            <person name="Pitluck S."/>
            <person name="Chertkov O."/>
            <person name="Brettin T."/>
            <person name="Bruce D."/>
            <person name="Han C."/>
            <person name="Tapia R."/>
            <person name="Gilna P."/>
            <person name="Schmutz J."/>
            <person name="Larimer F."/>
            <person name="Land M."/>
            <person name="Hauser L."/>
            <person name="Kyrpides N."/>
            <person name="Mikhailova N."/>
            <person name="Wu J.H.D."/>
            <person name="Newcomb M."/>
            <person name="Richardson P."/>
        </authorList>
    </citation>
    <scope>NUCLEOTIDE SEQUENCE [LARGE SCALE GENOMIC DNA]</scope>
    <source>
        <strain>ATCC 27405 / DSM 1237 / JCM 9322 / NBRC 103400 / NCIMB 10682 / NRRL B-4536 / VPI 7372</strain>
    </source>
</reference>